<comment type="function">
    <text evidence="1">Expression is induced during oxidative stress. Plays an essential, SCF-independent, role in the stress response to hydrogen peroxide for survival, by negatively regulating ergosterol synthesis via direct binding to the squalene synthase erg9.</text>
</comment>
<comment type="subunit">
    <text evidence="1">Component of the E3 ubiquitin ligase Skp1-Cullin-1-F-box (SCF) complex. Interacts with skp1, cul1 and erg9.</text>
</comment>
<comment type="interaction">
    <interactant intactId="EBI-1793014">
        <id>Q10223</id>
    </interactant>
    <interactant intactId="EBI-1794119">
        <id>P36596</id>
        <label>erg9</label>
    </interactant>
    <organismsDiffer>false</organismsDiffer>
    <experiments>5</experiments>
</comment>
<comment type="interaction">
    <interactant intactId="EBI-1793014">
        <id>Q10223</id>
    </interactant>
    <interactant intactId="EBI-1172248">
        <id>Q9Y709</id>
        <label>skp1</label>
    </interactant>
    <organismsDiffer>false</organismsDiffer>
    <experiments>5</experiments>
</comment>
<comment type="subcellular location">
    <subcellularLocation>
        <location>Cytoplasm</location>
    </subcellularLocation>
    <subcellularLocation>
        <location>Nucleus</location>
    </subcellularLocation>
    <subcellularLocation>
        <location>Endoplasmic reticulum</location>
    </subcellularLocation>
    <text>Associated with vesicle-like and endoplasmic reticulum (excluding a nuclear rim) structures.</text>
</comment>
<comment type="induction">
    <text evidence="1">Expression is induced during oxidative stress.</text>
</comment>
<name>POF14_SCHPO</name>
<keyword id="KW-0963">Cytoplasm</keyword>
<keyword id="KW-0256">Endoplasmic reticulum</keyword>
<keyword id="KW-0539">Nucleus</keyword>
<keyword id="KW-1185">Reference proteome</keyword>
<keyword id="KW-0833">Ubl conjugation pathway</keyword>
<feature type="chain" id="PRO_0000116488" description="F-box protein pof14">
    <location>
        <begin position="1"/>
        <end position="431"/>
    </location>
</feature>
<feature type="domain" description="F-box; atypical">
    <location>
        <begin position="172"/>
        <end position="186"/>
    </location>
</feature>
<protein>
    <recommendedName>
        <fullName>F-box protein pof14</fullName>
    </recommendedName>
</protein>
<accession>Q10223</accession>
<reference key="1">
    <citation type="journal article" date="2002" name="Nature">
        <title>The genome sequence of Schizosaccharomyces pombe.</title>
        <authorList>
            <person name="Wood V."/>
            <person name="Gwilliam R."/>
            <person name="Rajandream M.A."/>
            <person name="Lyne M.H."/>
            <person name="Lyne R."/>
            <person name="Stewart A."/>
            <person name="Sgouros J.G."/>
            <person name="Peat N."/>
            <person name="Hayles J."/>
            <person name="Baker S.G."/>
            <person name="Basham D."/>
            <person name="Bowman S."/>
            <person name="Brooks K."/>
            <person name="Brown D."/>
            <person name="Brown S."/>
            <person name="Chillingworth T."/>
            <person name="Churcher C.M."/>
            <person name="Collins M."/>
            <person name="Connor R."/>
            <person name="Cronin A."/>
            <person name="Davis P."/>
            <person name="Feltwell T."/>
            <person name="Fraser A."/>
            <person name="Gentles S."/>
            <person name="Goble A."/>
            <person name="Hamlin N."/>
            <person name="Harris D.E."/>
            <person name="Hidalgo J."/>
            <person name="Hodgson G."/>
            <person name="Holroyd S."/>
            <person name="Hornsby T."/>
            <person name="Howarth S."/>
            <person name="Huckle E.J."/>
            <person name="Hunt S."/>
            <person name="Jagels K."/>
            <person name="James K.D."/>
            <person name="Jones L."/>
            <person name="Jones M."/>
            <person name="Leather S."/>
            <person name="McDonald S."/>
            <person name="McLean J."/>
            <person name="Mooney P."/>
            <person name="Moule S."/>
            <person name="Mungall K.L."/>
            <person name="Murphy L.D."/>
            <person name="Niblett D."/>
            <person name="Odell C."/>
            <person name="Oliver K."/>
            <person name="O'Neil S."/>
            <person name="Pearson D."/>
            <person name="Quail M.A."/>
            <person name="Rabbinowitsch E."/>
            <person name="Rutherford K.M."/>
            <person name="Rutter S."/>
            <person name="Saunders D."/>
            <person name="Seeger K."/>
            <person name="Sharp S."/>
            <person name="Skelton J."/>
            <person name="Simmonds M.N."/>
            <person name="Squares R."/>
            <person name="Squares S."/>
            <person name="Stevens K."/>
            <person name="Taylor K."/>
            <person name="Taylor R.G."/>
            <person name="Tivey A."/>
            <person name="Walsh S.V."/>
            <person name="Warren T."/>
            <person name="Whitehead S."/>
            <person name="Woodward J.R."/>
            <person name="Volckaert G."/>
            <person name="Aert R."/>
            <person name="Robben J."/>
            <person name="Grymonprez B."/>
            <person name="Weltjens I."/>
            <person name="Vanstreels E."/>
            <person name="Rieger M."/>
            <person name="Schaefer M."/>
            <person name="Mueller-Auer S."/>
            <person name="Gabel C."/>
            <person name="Fuchs M."/>
            <person name="Duesterhoeft A."/>
            <person name="Fritzc C."/>
            <person name="Holzer E."/>
            <person name="Moestl D."/>
            <person name="Hilbert H."/>
            <person name="Borzym K."/>
            <person name="Langer I."/>
            <person name="Beck A."/>
            <person name="Lehrach H."/>
            <person name="Reinhardt R."/>
            <person name="Pohl T.M."/>
            <person name="Eger P."/>
            <person name="Zimmermann W."/>
            <person name="Wedler H."/>
            <person name="Wambutt R."/>
            <person name="Purnelle B."/>
            <person name="Goffeau A."/>
            <person name="Cadieu E."/>
            <person name="Dreano S."/>
            <person name="Gloux S."/>
            <person name="Lelaure V."/>
            <person name="Mottier S."/>
            <person name="Galibert F."/>
            <person name="Aves S.J."/>
            <person name="Xiang Z."/>
            <person name="Hunt C."/>
            <person name="Moore K."/>
            <person name="Hurst S.M."/>
            <person name="Lucas M."/>
            <person name="Rochet M."/>
            <person name="Gaillardin C."/>
            <person name="Tallada V.A."/>
            <person name="Garzon A."/>
            <person name="Thode G."/>
            <person name="Daga R.R."/>
            <person name="Cruzado L."/>
            <person name="Jimenez J."/>
            <person name="Sanchez M."/>
            <person name="del Rey F."/>
            <person name="Benito J."/>
            <person name="Dominguez A."/>
            <person name="Revuelta J.L."/>
            <person name="Moreno S."/>
            <person name="Armstrong J."/>
            <person name="Forsburg S.L."/>
            <person name="Cerutti L."/>
            <person name="Lowe T."/>
            <person name="McCombie W.R."/>
            <person name="Paulsen I."/>
            <person name="Potashkin J."/>
            <person name="Shpakovski G.V."/>
            <person name="Ussery D."/>
            <person name="Barrell B.G."/>
            <person name="Nurse P."/>
        </authorList>
    </citation>
    <scope>NUCLEOTIDE SEQUENCE [LARGE SCALE GENOMIC DNA]</scope>
    <source>
        <strain>972 / ATCC 24843</strain>
    </source>
</reference>
<reference key="2">
    <citation type="journal article" date="2006" name="EMBO J.">
        <title>Repression of ergosterol level during oxidative stress by fission yeast F-box protein Pof14 independently of SCF.</title>
        <authorList>
            <person name="Tafforeau L."/>
            <person name="Le Blastier S."/>
            <person name="Bamps S."/>
            <person name="Dewez M."/>
            <person name="Vandenhaute J."/>
            <person name="Hermand D."/>
        </authorList>
    </citation>
    <scope>FUNCTION</scope>
    <scope>INTERACTION WITH CUL1; ERG9 AND SKP1</scope>
    <scope>SUBCELLULAR LOCATION</scope>
    <scope>INDUCTION</scope>
</reference>
<reference key="3">
    <citation type="journal article" date="2006" name="Nat. Biotechnol.">
        <title>ORFeome cloning and global analysis of protein localization in the fission yeast Schizosaccharomyces pombe.</title>
        <authorList>
            <person name="Matsuyama A."/>
            <person name="Arai R."/>
            <person name="Yashiroda Y."/>
            <person name="Shirai A."/>
            <person name="Kamata A."/>
            <person name="Sekido S."/>
            <person name="Kobayashi Y."/>
            <person name="Hashimoto A."/>
            <person name="Hamamoto M."/>
            <person name="Hiraoka Y."/>
            <person name="Horinouchi S."/>
            <person name="Yoshida M."/>
        </authorList>
    </citation>
    <scope>SUBCELLULAR LOCATION [LARGE SCALE ANALYSIS]</scope>
</reference>
<proteinExistence type="evidence at protein level"/>
<gene>
    <name type="primary">pof14</name>
    <name type="ORF">SPAC13D6.01</name>
</gene>
<sequence length="431" mass="49624">MLQFSFQNCKTHTCYMNTSVNEHLDQDESFLRILIDTRKKIRSSYFKPQTFDEFVHCLARVRAMKRLVSICSNFDEEDNWNGVWNTLVVDGDSHASAMIDYEGLLDKCSLSRNLLELINDYAEYTTQVLPFRKIPSSDNLDSSLNLTVASPKSNLYYRYSSESPKYAKILDCPDEILQLIFSYCYDASYIEKLPFAFSYRKQRHTLIHDLPNTCLRFKKILSPRNVSFWKRLLKVHKKNPNSAVTCSESINTSAVAKFTDIPTIIPIFLDPSYQSYAAKTIHSDTSSLASSIIQTGDGTQSCDESTYIELACNLVGRCVLCNRIPKLTKFKDCITSFYRPSVATNICDQCLEAIIDFYEPVSRYKFDVMKDRLGVGYISRPGQKFPSWLSEHVQLARDEEKAFKSIYHSQGEFARSLFRLFRAQLAELCEQ</sequence>
<evidence type="ECO:0000269" key="1">
    <source>
    </source>
</evidence>
<organism>
    <name type="scientific">Schizosaccharomyces pombe (strain 972 / ATCC 24843)</name>
    <name type="common">Fission yeast</name>
    <dbReference type="NCBI Taxonomy" id="284812"/>
    <lineage>
        <taxon>Eukaryota</taxon>
        <taxon>Fungi</taxon>
        <taxon>Dikarya</taxon>
        <taxon>Ascomycota</taxon>
        <taxon>Taphrinomycotina</taxon>
        <taxon>Schizosaccharomycetes</taxon>
        <taxon>Schizosaccharomycetales</taxon>
        <taxon>Schizosaccharomycetaceae</taxon>
        <taxon>Schizosaccharomyces</taxon>
    </lineage>
</organism>
<dbReference type="EMBL" id="CU329670">
    <property type="protein sequence ID" value="CAA93541.1"/>
    <property type="molecule type" value="Genomic_DNA"/>
</dbReference>
<dbReference type="PIR" id="T37621">
    <property type="entry name" value="T37621"/>
</dbReference>
<dbReference type="RefSeq" id="NP_593679.1">
    <property type="nucleotide sequence ID" value="NM_001019111.2"/>
</dbReference>
<dbReference type="SMR" id="Q10223"/>
<dbReference type="BioGRID" id="279262">
    <property type="interactions" value="21"/>
</dbReference>
<dbReference type="IntAct" id="Q10223">
    <property type="interactions" value="6"/>
</dbReference>
<dbReference type="MINT" id="Q10223"/>
<dbReference type="STRING" id="284812.Q10223"/>
<dbReference type="iPTMnet" id="Q10223"/>
<dbReference type="PaxDb" id="4896-SPAC13D6.01.1"/>
<dbReference type="EnsemblFungi" id="SPAC13D6.01.1">
    <property type="protein sequence ID" value="SPAC13D6.01.1:pep"/>
    <property type="gene ID" value="SPAC13D6.01"/>
</dbReference>
<dbReference type="GeneID" id="2542815"/>
<dbReference type="KEGG" id="spo:2542815"/>
<dbReference type="PomBase" id="SPAC13D6.01">
    <property type="gene designation" value="pof14"/>
</dbReference>
<dbReference type="VEuPathDB" id="FungiDB:SPAC13D6.01"/>
<dbReference type="HOGENOM" id="CLU_694751_0_0_1"/>
<dbReference type="InParanoid" id="Q10223"/>
<dbReference type="OMA" id="WLSEHVQ"/>
<dbReference type="PRO" id="PR:Q10223"/>
<dbReference type="Proteomes" id="UP000002485">
    <property type="component" value="Chromosome I"/>
</dbReference>
<dbReference type="GO" id="GO:0005829">
    <property type="term" value="C:cytosol"/>
    <property type="evidence" value="ECO:0007005"/>
    <property type="project" value="PomBase"/>
</dbReference>
<dbReference type="GO" id="GO:0005789">
    <property type="term" value="C:endoplasmic reticulum membrane"/>
    <property type="evidence" value="ECO:0000314"/>
    <property type="project" value="PomBase"/>
</dbReference>
<dbReference type="GO" id="GO:0042175">
    <property type="term" value="C:nuclear outer membrane-endoplasmic reticulum membrane network"/>
    <property type="evidence" value="ECO:0000314"/>
    <property type="project" value="PomBase"/>
</dbReference>
<dbReference type="GO" id="GO:0005634">
    <property type="term" value="C:nucleus"/>
    <property type="evidence" value="ECO:0007005"/>
    <property type="project" value="PomBase"/>
</dbReference>
<dbReference type="GO" id="GO:0019005">
    <property type="term" value="C:SCF ubiquitin ligase complex"/>
    <property type="evidence" value="ECO:0000314"/>
    <property type="project" value="UniProtKB"/>
</dbReference>
<dbReference type="GO" id="GO:0034599">
    <property type="term" value="P:cellular response to oxidative stress"/>
    <property type="evidence" value="ECO:0000315"/>
    <property type="project" value="PomBase"/>
</dbReference>
<dbReference type="GO" id="GO:0032443">
    <property type="term" value="P:regulation of ergosterol biosynthetic process"/>
    <property type="evidence" value="ECO:0000314"/>
    <property type="project" value="UniProtKB"/>
</dbReference>
<dbReference type="GO" id="GO:0006979">
    <property type="term" value="P:response to oxidative stress"/>
    <property type="evidence" value="ECO:0000314"/>
    <property type="project" value="UniProtKB"/>
</dbReference>
<dbReference type="GO" id="GO:0006511">
    <property type="term" value="P:ubiquitin-dependent protein catabolic process"/>
    <property type="evidence" value="ECO:0000353"/>
    <property type="project" value="PomBase"/>
</dbReference>
<dbReference type="InterPro" id="IPR001810">
    <property type="entry name" value="F-box_dom"/>
</dbReference>
<dbReference type="Pfam" id="PF13013">
    <property type="entry name" value="F-box-like_2"/>
    <property type="match status" value="1"/>
</dbReference>